<protein>
    <recommendedName>
        <fullName evidence="1">4-hydroxybenzoate octaprenyltransferase</fullName>
        <ecNumber evidence="1">2.5.1.39</ecNumber>
    </recommendedName>
    <alternativeName>
        <fullName evidence="1">4-HB polyprenyltransferase</fullName>
    </alternativeName>
</protein>
<gene>
    <name evidence="1" type="primary">ubiA</name>
    <name type="ordered locus">Bcenmc03_0697</name>
</gene>
<organism>
    <name type="scientific">Burkholderia orbicola (strain MC0-3)</name>
    <dbReference type="NCBI Taxonomy" id="406425"/>
    <lineage>
        <taxon>Bacteria</taxon>
        <taxon>Pseudomonadati</taxon>
        <taxon>Pseudomonadota</taxon>
        <taxon>Betaproteobacteria</taxon>
        <taxon>Burkholderiales</taxon>
        <taxon>Burkholderiaceae</taxon>
        <taxon>Burkholderia</taxon>
        <taxon>Burkholderia cepacia complex</taxon>
        <taxon>Burkholderia orbicola</taxon>
    </lineage>
</organism>
<name>UBIA_BURO0</name>
<accession>B1JVZ5</accession>
<proteinExistence type="inferred from homology"/>
<reference key="1">
    <citation type="submission" date="2008-02" db="EMBL/GenBank/DDBJ databases">
        <title>Complete sequence of chromosome 1 of Burkholderia cenocepacia MC0-3.</title>
        <authorList>
            <person name="Copeland A."/>
            <person name="Lucas S."/>
            <person name="Lapidus A."/>
            <person name="Barry K."/>
            <person name="Bruce D."/>
            <person name="Goodwin L."/>
            <person name="Glavina del Rio T."/>
            <person name="Dalin E."/>
            <person name="Tice H."/>
            <person name="Pitluck S."/>
            <person name="Chain P."/>
            <person name="Malfatti S."/>
            <person name="Shin M."/>
            <person name="Vergez L."/>
            <person name="Schmutz J."/>
            <person name="Larimer F."/>
            <person name="Land M."/>
            <person name="Hauser L."/>
            <person name="Kyrpides N."/>
            <person name="Mikhailova N."/>
            <person name="Tiedje J."/>
            <person name="Richardson P."/>
        </authorList>
    </citation>
    <scope>NUCLEOTIDE SEQUENCE [LARGE SCALE GENOMIC DNA]</scope>
    <source>
        <strain>MC0-3</strain>
    </source>
</reference>
<feature type="chain" id="PRO_1000186656" description="4-hydroxybenzoate octaprenyltransferase">
    <location>
        <begin position="1"/>
        <end position="287"/>
    </location>
</feature>
<feature type="transmembrane region" description="Helical" evidence="1">
    <location>
        <begin position="41"/>
        <end position="61"/>
    </location>
</feature>
<feature type="transmembrane region" description="Helical" evidence="1">
    <location>
        <begin position="89"/>
        <end position="109"/>
    </location>
</feature>
<feature type="transmembrane region" description="Helical" evidence="1">
    <location>
        <begin position="133"/>
        <end position="153"/>
    </location>
</feature>
<feature type="transmembrane region" description="Helical" evidence="1">
    <location>
        <begin position="158"/>
        <end position="178"/>
    </location>
</feature>
<feature type="transmembrane region" description="Helical" evidence="1">
    <location>
        <begin position="202"/>
        <end position="224"/>
    </location>
</feature>
<feature type="transmembrane region" description="Helical" evidence="1">
    <location>
        <begin position="266"/>
        <end position="286"/>
    </location>
</feature>
<evidence type="ECO:0000255" key="1">
    <source>
        <dbReference type="HAMAP-Rule" id="MF_01635"/>
    </source>
</evidence>
<comment type="function">
    <text evidence="1">Catalyzes the prenylation of para-hydroxybenzoate (PHB) with an all-trans polyprenyl group. Mediates the second step in the final reaction sequence of ubiquinone-8 (UQ-8) biosynthesis, which is the condensation of the polyisoprenoid side chain with PHB, generating the first membrane-bound Q intermediate 3-octaprenyl-4-hydroxybenzoate.</text>
</comment>
<comment type="catalytic activity">
    <reaction evidence="1">
        <text>all-trans-octaprenyl diphosphate + 4-hydroxybenzoate = 4-hydroxy-3-(all-trans-octaprenyl)benzoate + diphosphate</text>
        <dbReference type="Rhea" id="RHEA:27782"/>
        <dbReference type="ChEBI" id="CHEBI:1617"/>
        <dbReference type="ChEBI" id="CHEBI:17879"/>
        <dbReference type="ChEBI" id="CHEBI:33019"/>
        <dbReference type="ChEBI" id="CHEBI:57711"/>
        <dbReference type="EC" id="2.5.1.39"/>
    </reaction>
</comment>
<comment type="cofactor">
    <cofactor evidence="1">
        <name>Mg(2+)</name>
        <dbReference type="ChEBI" id="CHEBI:18420"/>
    </cofactor>
</comment>
<comment type="pathway">
    <text evidence="1">Cofactor biosynthesis; ubiquinone biosynthesis.</text>
</comment>
<comment type="subcellular location">
    <subcellularLocation>
        <location evidence="1">Cell inner membrane</location>
        <topology evidence="1">Multi-pass membrane protein</topology>
    </subcellularLocation>
</comment>
<comment type="similarity">
    <text evidence="1">Belongs to the UbiA prenyltransferase family.</text>
</comment>
<dbReference type="EC" id="2.5.1.39" evidence="1"/>
<dbReference type="EMBL" id="CP000958">
    <property type="protein sequence ID" value="ACA89875.1"/>
    <property type="molecule type" value="Genomic_DNA"/>
</dbReference>
<dbReference type="RefSeq" id="WP_012327930.1">
    <property type="nucleotide sequence ID" value="NC_010508.1"/>
</dbReference>
<dbReference type="SMR" id="B1JVZ5"/>
<dbReference type="GeneID" id="83047496"/>
<dbReference type="KEGG" id="bcm:Bcenmc03_0697"/>
<dbReference type="HOGENOM" id="CLU_034879_1_0_4"/>
<dbReference type="UniPathway" id="UPA00232"/>
<dbReference type="Proteomes" id="UP000002169">
    <property type="component" value="Chromosome 1"/>
</dbReference>
<dbReference type="GO" id="GO:0005886">
    <property type="term" value="C:plasma membrane"/>
    <property type="evidence" value="ECO:0007669"/>
    <property type="project" value="UniProtKB-SubCell"/>
</dbReference>
<dbReference type="GO" id="GO:0008412">
    <property type="term" value="F:4-hydroxybenzoate polyprenyltransferase activity"/>
    <property type="evidence" value="ECO:0007669"/>
    <property type="project" value="UniProtKB-UniRule"/>
</dbReference>
<dbReference type="GO" id="GO:0006744">
    <property type="term" value="P:ubiquinone biosynthetic process"/>
    <property type="evidence" value="ECO:0007669"/>
    <property type="project" value="UniProtKB-UniRule"/>
</dbReference>
<dbReference type="CDD" id="cd13959">
    <property type="entry name" value="PT_UbiA_COQ2"/>
    <property type="match status" value="1"/>
</dbReference>
<dbReference type="FunFam" id="1.10.357.140:FF:000002">
    <property type="entry name" value="4-hydroxybenzoate octaprenyltransferase"/>
    <property type="match status" value="1"/>
</dbReference>
<dbReference type="FunFam" id="1.20.120.1780:FF:000001">
    <property type="entry name" value="4-hydroxybenzoate octaprenyltransferase"/>
    <property type="match status" value="1"/>
</dbReference>
<dbReference type="Gene3D" id="1.10.357.140">
    <property type="entry name" value="UbiA prenyltransferase"/>
    <property type="match status" value="1"/>
</dbReference>
<dbReference type="Gene3D" id="1.20.120.1780">
    <property type="entry name" value="UbiA prenyltransferase"/>
    <property type="match status" value="1"/>
</dbReference>
<dbReference type="HAMAP" id="MF_01635">
    <property type="entry name" value="UbiA"/>
    <property type="match status" value="1"/>
</dbReference>
<dbReference type="InterPro" id="IPR006370">
    <property type="entry name" value="HB_polyprenyltransferase-like"/>
</dbReference>
<dbReference type="InterPro" id="IPR039653">
    <property type="entry name" value="Prenyltransferase"/>
</dbReference>
<dbReference type="InterPro" id="IPR000537">
    <property type="entry name" value="UbiA_prenyltransferase"/>
</dbReference>
<dbReference type="InterPro" id="IPR030470">
    <property type="entry name" value="UbiA_prenylTrfase_CS"/>
</dbReference>
<dbReference type="InterPro" id="IPR044878">
    <property type="entry name" value="UbiA_sf"/>
</dbReference>
<dbReference type="NCBIfam" id="TIGR01474">
    <property type="entry name" value="ubiA_proteo"/>
    <property type="match status" value="1"/>
</dbReference>
<dbReference type="PANTHER" id="PTHR11048:SF28">
    <property type="entry name" value="4-HYDROXYBENZOATE POLYPRENYLTRANSFERASE, MITOCHONDRIAL"/>
    <property type="match status" value="1"/>
</dbReference>
<dbReference type="PANTHER" id="PTHR11048">
    <property type="entry name" value="PRENYLTRANSFERASES"/>
    <property type="match status" value="1"/>
</dbReference>
<dbReference type="Pfam" id="PF01040">
    <property type="entry name" value="UbiA"/>
    <property type="match status" value="1"/>
</dbReference>
<dbReference type="PROSITE" id="PS00943">
    <property type="entry name" value="UBIA"/>
    <property type="match status" value="1"/>
</dbReference>
<sequence>MLARFPLYLRLVRMDKPIGSLLLLWPTLNALWIASDGRPRWPLLVIFTLGTLLMRSAGCAMNDYADRDFDRHVKRTADRPLTSGKIRAWEAVAIAVGLSFIAFLLILPLNTLTKELSVVALFVAGSYPFMKRFFAIPQAYLGIAFGFGIPMAFAAVQDTVPMLAWVMLVANIFWSVAYDTEYAMVDRDDDIKIGIRTSALTFGRFDVAAVMACYAATLGIYVWIGVTLGFGLAYWAGWAAAVGCALYHYTLIKDRERMPCFAAFRHNNWLGGVLFAGIAVHYLLAGN</sequence>
<keyword id="KW-0997">Cell inner membrane</keyword>
<keyword id="KW-1003">Cell membrane</keyword>
<keyword id="KW-0460">Magnesium</keyword>
<keyword id="KW-0472">Membrane</keyword>
<keyword id="KW-0808">Transferase</keyword>
<keyword id="KW-0812">Transmembrane</keyword>
<keyword id="KW-1133">Transmembrane helix</keyword>
<keyword id="KW-0831">Ubiquinone biosynthesis</keyword>